<organism>
    <name type="scientific">Centruroides limbatus</name>
    <name type="common">Bark scorpion</name>
    <dbReference type="NCBI Taxonomy" id="244936"/>
    <lineage>
        <taxon>Eukaryota</taxon>
        <taxon>Metazoa</taxon>
        <taxon>Ecdysozoa</taxon>
        <taxon>Arthropoda</taxon>
        <taxon>Chelicerata</taxon>
        <taxon>Arachnida</taxon>
        <taxon>Scorpiones</taxon>
        <taxon>Buthida</taxon>
        <taxon>Buthoidea</taxon>
        <taxon>Buthidae</taxon>
        <taxon>Centruroides</taxon>
    </lineage>
</organism>
<name>KAX2Y_CENLM</name>
<comment type="function">
    <text evidence="1">Potent selective inhibitor of Kv1/KCNA voltage-gated potassium channels.</text>
</comment>
<comment type="subcellular location">
    <subcellularLocation>
        <location evidence="2">Secreted</location>
    </subcellularLocation>
</comment>
<comment type="tissue specificity">
    <text evidence="5">Expressed by the venom gland.</text>
</comment>
<comment type="domain">
    <text evidence="4">Has the structural arrangement of an alpha-helix connected to antiparallel beta-sheets by disulfide bonds (CS-alpha/beta).</text>
</comment>
<comment type="similarity">
    <text evidence="4">Belongs to the short scorpion toxin superfamily. Potassium channel inhibitor family. Alpha-KTx 02 subfamily.</text>
</comment>
<protein>
    <recommendedName>
        <fullName evidence="3">Hongotoxin-4</fullName>
        <shortName evidence="3">HgTX4</shortName>
    </recommendedName>
    <alternativeName>
        <fullName evidence="4">Potassium channel toxin alpha-KTx 02</fullName>
    </alternativeName>
</protein>
<sequence>KVIDVKCTSPKQCLPPCKAQFGD</sequence>
<proteinExistence type="evidence at protein level"/>
<reference key="1">
    <citation type="journal article" date="1998" name="J. Biol. Chem.">
        <title>Subunit composition of brain voltage-gated potassium channels determined by hongotoxin-1, a novel peptide derived from Centruroides limbatus venom.</title>
        <authorList>
            <person name="Koschak A."/>
            <person name="Bugianesi R.M."/>
            <person name="Mitterdorfer J."/>
            <person name="Kaczorowski G.J."/>
            <person name="Garcia M.L."/>
            <person name="Knaus H.-G."/>
        </authorList>
    </citation>
    <scope>PROTEIN SEQUENCE</scope>
    <scope>SUBCELLULAR LOCATION</scope>
</reference>
<evidence type="ECO:0000250" key="1"/>
<evidence type="ECO:0000269" key="2">
    <source>
    </source>
</evidence>
<evidence type="ECO:0000303" key="3">
    <source>
    </source>
</evidence>
<evidence type="ECO:0000305" key="4"/>
<evidence type="ECO:0000305" key="5">
    <source>
    </source>
</evidence>
<accession>P59850</accession>
<dbReference type="GO" id="GO:0005576">
    <property type="term" value="C:extracellular region"/>
    <property type="evidence" value="ECO:0007669"/>
    <property type="project" value="UniProtKB-SubCell"/>
</dbReference>
<dbReference type="GO" id="GO:0008200">
    <property type="term" value="F:ion channel inhibitor activity"/>
    <property type="evidence" value="ECO:0007669"/>
    <property type="project" value="InterPro"/>
</dbReference>
<dbReference type="GO" id="GO:0015459">
    <property type="term" value="F:potassium channel regulator activity"/>
    <property type="evidence" value="ECO:0007669"/>
    <property type="project" value="UniProtKB-KW"/>
</dbReference>
<dbReference type="GO" id="GO:0090729">
    <property type="term" value="F:toxin activity"/>
    <property type="evidence" value="ECO:0007669"/>
    <property type="project" value="UniProtKB-KW"/>
</dbReference>
<dbReference type="Gene3D" id="3.30.30.10">
    <property type="entry name" value="Knottin, scorpion toxin-like"/>
    <property type="match status" value="1"/>
</dbReference>
<dbReference type="InterPro" id="IPR036574">
    <property type="entry name" value="Scorpion_toxin-like_sf"/>
</dbReference>
<dbReference type="InterPro" id="IPR001947">
    <property type="entry name" value="Scorpion_toxinS_K_inh"/>
</dbReference>
<dbReference type="Pfam" id="PF00451">
    <property type="entry name" value="Toxin_2"/>
    <property type="match status" value="1"/>
</dbReference>
<dbReference type="SUPFAM" id="SSF57095">
    <property type="entry name" value="Scorpion toxin-like"/>
    <property type="match status" value="1"/>
</dbReference>
<keyword id="KW-0903">Direct protein sequencing</keyword>
<keyword id="KW-0872">Ion channel impairing toxin</keyword>
<keyword id="KW-0528">Neurotoxin</keyword>
<keyword id="KW-0632">Potassium channel impairing toxin</keyword>
<keyword id="KW-0964">Secreted</keyword>
<keyword id="KW-0800">Toxin</keyword>
<keyword id="KW-1220">Voltage-gated potassium channel impairing toxin</keyword>
<feature type="chain" id="PRO_0000066835" description="Hongotoxin-4">
    <location>
        <begin position="1"/>
        <end position="23" status="greater than"/>
    </location>
</feature>
<feature type="non-terminal residue">
    <location>
        <position position="23"/>
    </location>
</feature>